<protein>
    <recommendedName>
        <fullName evidence="1">Acireductone dioxygenase</fullName>
    </recommendedName>
    <alternativeName>
        <fullName evidence="1">1,2-dihydroxy-3-keto-5-methylthiopentene dioxygenase</fullName>
        <shortName evidence="1">DHK-MTPene dioxygenase 1</shortName>
    </alternativeName>
    <alternativeName>
        <fullName evidence="1">Acireductone dioxygenase (Fe(2+)-requiring)</fullName>
        <shortName evidence="1">ARD'</shortName>
        <shortName evidence="1">Fe-ARD</shortName>
        <ecNumber evidence="1">1.13.11.54</ecNumber>
    </alternativeName>
    <alternativeName>
        <fullName evidence="1">Acireductone dioxygenase (Ni(2+)-requiring)</fullName>
        <shortName evidence="1">ARD</shortName>
        <shortName evidence="1">Ni-ARD</shortName>
        <ecNumber evidence="1">1.13.11.53</ecNumber>
    </alternativeName>
</protein>
<gene>
    <name evidence="1" type="primary">mtnD</name>
    <name type="ordered locus">GOX1243</name>
</gene>
<reference key="1">
    <citation type="journal article" date="1999" name="FEMS Microbiol. Lett.">
        <title>A mutant of gluconobacter oxydans deficient in gluconic acid dehydrogenase.</title>
        <authorList>
            <person name="Gupta A."/>
            <person name="Felder M."/>
            <person name="Verma V.V."/>
            <person name="Cullum J."/>
            <person name="Qazi G.N."/>
        </authorList>
    </citation>
    <scope>NUCLEOTIDE SEQUENCE [GENOMIC DNA]</scope>
    <source>
        <strain>ATCC 9937 / LMG 1404 / NCIMB 8084</strain>
    </source>
</reference>
<reference key="2">
    <citation type="journal article" date="2005" name="Nat. Biotechnol.">
        <title>Complete genome sequence of the acetic acid bacterium Gluconobacter oxydans.</title>
        <authorList>
            <person name="Prust C."/>
            <person name="Hoffmeister M."/>
            <person name="Liesegang H."/>
            <person name="Wiezer A."/>
            <person name="Fricke W.F."/>
            <person name="Ehrenreich A."/>
            <person name="Gottschalk G."/>
            <person name="Deppenmeier U."/>
        </authorList>
    </citation>
    <scope>NUCLEOTIDE SEQUENCE [LARGE SCALE GENOMIC DNA]</scope>
    <source>
        <strain>621H</strain>
    </source>
</reference>
<comment type="function">
    <text evidence="1">Catalyzes 2 different reactions between oxygen and the acireductone 1,2-dihydroxy-3-keto-5-methylthiopentene (DHK-MTPene) depending upon the metal bound in the active site. Fe-containing acireductone dioxygenase (Fe-ARD) produces formate and 2-keto-4-methylthiobutyrate (KMTB), the alpha-ketoacid precursor of methionine in the methionine recycle pathway. Ni-containing acireductone dioxygenase (Ni-ARD) produces methylthiopropionate, carbon monoxide and formate, and does not lie on the methionine recycle pathway.</text>
</comment>
<comment type="catalytic activity">
    <reaction evidence="1">
        <text>1,2-dihydroxy-5-(methylsulfanyl)pent-1-en-3-one + O2 = 3-(methylsulfanyl)propanoate + CO + formate + 2 H(+)</text>
        <dbReference type="Rhea" id="RHEA:14161"/>
        <dbReference type="ChEBI" id="CHEBI:15378"/>
        <dbReference type="ChEBI" id="CHEBI:15379"/>
        <dbReference type="ChEBI" id="CHEBI:15740"/>
        <dbReference type="ChEBI" id="CHEBI:17245"/>
        <dbReference type="ChEBI" id="CHEBI:49016"/>
        <dbReference type="ChEBI" id="CHEBI:49252"/>
        <dbReference type="EC" id="1.13.11.53"/>
    </reaction>
</comment>
<comment type="catalytic activity">
    <reaction evidence="1">
        <text>1,2-dihydroxy-5-(methylsulfanyl)pent-1-en-3-one + O2 = 4-methylsulfanyl-2-oxobutanoate + formate + 2 H(+)</text>
        <dbReference type="Rhea" id="RHEA:24504"/>
        <dbReference type="ChEBI" id="CHEBI:15378"/>
        <dbReference type="ChEBI" id="CHEBI:15379"/>
        <dbReference type="ChEBI" id="CHEBI:15740"/>
        <dbReference type="ChEBI" id="CHEBI:16723"/>
        <dbReference type="ChEBI" id="CHEBI:49252"/>
        <dbReference type="EC" id="1.13.11.54"/>
    </reaction>
</comment>
<comment type="cofactor">
    <cofactor evidence="1">
        <name>Fe(2+)</name>
        <dbReference type="ChEBI" id="CHEBI:29033"/>
    </cofactor>
    <text evidence="1">Binds 1 Fe(2+) cation per monomer.</text>
</comment>
<comment type="cofactor">
    <cofactor evidence="1">
        <name>Ni(2+)</name>
        <dbReference type="ChEBI" id="CHEBI:49786"/>
    </cofactor>
    <text evidence="1">Binds 1 nickel ion per monomer.</text>
</comment>
<comment type="pathway">
    <text evidence="1">Amino-acid biosynthesis; L-methionine biosynthesis via salvage pathway; L-methionine from S-methyl-5-thio-alpha-D-ribose 1-phosphate: step 5/6.</text>
</comment>
<comment type="subunit">
    <text evidence="1">Monomer.</text>
</comment>
<comment type="similarity">
    <text evidence="1">Belongs to the acireductone dioxygenase (ARD) family.</text>
</comment>
<proteinExistence type="inferred from homology"/>
<sequence length="188" mass="20613">MSRLTVYRDDAPDTILLDVTTPGEIAETLRPHNIRFDRWSAPITPAPDAPAEEVLDAYRPYLDTLMGETGAGSADVVRINASTPNLPELRKKFLSEHTHSEDEVRFFVHGQGAFVLHIRGRVYSVLCTQGDLISVPAGIPHWFDAGPSPDVVALRVFTDTTGWIAQYTGDDIANRFPAEVPVEASGNS</sequence>
<accession>Q5FRJ2</accession>
<accession>Q9RM34</accession>
<dbReference type="EC" id="1.13.11.54" evidence="1"/>
<dbReference type="EC" id="1.13.11.53" evidence="1"/>
<dbReference type="EMBL" id="AJ238888">
    <property type="protein sequence ID" value="CAB55631.1"/>
    <property type="molecule type" value="Genomic_DNA"/>
</dbReference>
<dbReference type="EMBL" id="CP000009">
    <property type="protein sequence ID" value="AAW61004.1"/>
    <property type="molecule type" value="Genomic_DNA"/>
</dbReference>
<dbReference type="RefSeq" id="WP_011252796.1">
    <property type="nucleotide sequence ID" value="NC_006677.1"/>
</dbReference>
<dbReference type="SMR" id="Q5FRJ2"/>
<dbReference type="STRING" id="290633.GOX1243"/>
<dbReference type="KEGG" id="gox:GOX1243"/>
<dbReference type="eggNOG" id="COG1791">
    <property type="taxonomic scope" value="Bacteria"/>
</dbReference>
<dbReference type="HOGENOM" id="CLU_125400_0_0_5"/>
<dbReference type="UniPathway" id="UPA00904">
    <property type="reaction ID" value="UER00878"/>
</dbReference>
<dbReference type="Proteomes" id="UP000006375">
    <property type="component" value="Chromosome"/>
</dbReference>
<dbReference type="GO" id="GO:0010308">
    <property type="term" value="F:acireductone dioxygenase (Ni2+-requiring) activity"/>
    <property type="evidence" value="ECO:0007669"/>
    <property type="project" value="UniProtKB-UniRule"/>
</dbReference>
<dbReference type="GO" id="GO:0010309">
    <property type="term" value="F:acireductone dioxygenase [iron(II)-requiring] activity"/>
    <property type="evidence" value="ECO:0007669"/>
    <property type="project" value="UniProtKB-UniRule"/>
</dbReference>
<dbReference type="GO" id="GO:0005506">
    <property type="term" value="F:iron ion binding"/>
    <property type="evidence" value="ECO:0007669"/>
    <property type="project" value="UniProtKB-UniRule"/>
</dbReference>
<dbReference type="GO" id="GO:0016151">
    <property type="term" value="F:nickel cation binding"/>
    <property type="evidence" value="ECO:0007669"/>
    <property type="project" value="UniProtKB-UniRule"/>
</dbReference>
<dbReference type="GO" id="GO:0019509">
    <property type="term" value="P:L-methionine salvage from methylthioadenosine"/>
    <property type="evidence" value="ECO:0007669"/>
    <property type="project" value="UniProtKB-UniRule"/>
</dbReference>
<dbReference type="GO" id="GO:0019284">
    <property type="term" value="P:L-methionine salvage from S-adenosylmethionine"/>
    <property type="evidence" value="ECO:0007669"/>
    <property type="project" value="InterPro"/>
</dbReference>
<dbReference type="CDD" id="cd02232">
    <property type="entry name" value="cupin_ARD"/>
    <property type="match status" value="1"/>
</dbReference>
<dbReference type="Gene3D" id="2.60.120.10">
    <property type="entry name" value="Jelly Rolls"/>
    <property type="match status" value="1"/>
</dbReference>
<dbReference type="HAMAP" id="MF_01682">
    <property type="entry name" value="Salvage_MtnD"/>
    <property type="match status" value="1"/>
</dbReference>
<dbReference type="InterPro" id="IPR004313">
    <property type="entry name" value="ARD"/>
</dbReference>
<dbReference type="InterPro" id="IPR023956">
    <property type="entry name" value="ARD_bac"/>
</dbReference>
<dbReference type="InterPro" id="IPR014710">
    <property type="entry name" value="RmlC-like_jellyroll"/>
</dbReference>
<dbReference type="InterPro" id="IPR011051">
    <property type="entry name" value="RmlC_Cupin_sf"/>
</dbReference>
<dbReference type="PANTHER" id="PTHR23418">
    <property type="entry name" value="ACIREDUCTONE DIOXYGENASE"/>
    <property type="match status" value="1"/>
</dbReference>
<dbReference type="PANTHER" id="PTHR23418:SF0">
    <property type="entry name" value="ACIREDUCTONE DIOXYGENASE"/>
    <property type="match status" value="1"/>
</dbReference>
<dbReference type="Pfam" id="PF03079">
    <property type="entry name" value="ARD"/>
    <property type="match status" value="1"/>
</dbReference>
<dbReference type="SUPFAM" id="SSF51182">
    <property type="entry name" value="RmlC-like cupins"/>
    <property type="match status" value="1"/>
</dbReference>
<name>MTND_GLUOX</name>
<organism>
    <name type="scientific">Gluconobacter oxydans (strain 621H)</name>
    <name type="common">Gluconobacter suboxydans</name>
    <dbReference type="NCBI Taxonomy" id="290633"/>
    <lineage>
        <taxon>Bacteria</taxon>
        <taxon>Pseudomonadati</taxon>
        <taxon>Pseudomonadota</taxon>
        <taxon>Alphaproteobacteria</taxon>
        <taxon>Acetobacterales</taxon>
        <taxon>Acetobacteraceae</taxon>
        <taxon>Gluconobacter</taxon>
    </lineage>
</organism>
<feature type="chain" id="PRO_0000359196" description="Acireductone dioxygenase">
    <location>
        <begin position="1"/>
        <end position="188"/>
    </location>
</feature>
<feature type="binding site" evidence="1">
    <location>
        <position position="97"/>
    </location>
    <ligand>
        <name>Fe(2+)</name>
        <dbReference type="ChEBI" id="CHEBI:29033"/>
    </ligand>
</feature>
<feature type="binding site" evidence="1">
    <location>
        <position position="97"/>
    </location>
    <ligand>
        <name>Ni(2+)</name>
        <dbReference type="ChEBI" id="CHEBI:49786"/>
    </ligand>
</feature>
<feature type="binding site" evidence="1">
    <location>
        <position position="99"/>
    </location>
    <ligand>
        <name>Fe(2+)</name>
        <dbReference type="ChEBI" id="CHEBI:29033"/>
    </ligand>
</feature>
<feature type="binding site" evidence="1">
    <location>
        <position position="99"/>
    </location>
    <ligand>
        <name>Ni(2+)</name>
        <dbReference type="ChEBI" id="CHEBI:49786"/>
    </ligand>
</feature>
<feature type="binding site" evidence="1">
    <location>
        <position position="103"/>
    </location>
    <ligand>
        <name>Fe(2+)</name>
        <dbReference type="ChEBI" id="CHEBI:29033"/>
    </ligand>
</feature>
<feature type="binding site" evidence="1">
    <location>
        <position position="103"/>
    </location>
    <ligand>
        <name>Ni(2+)</name>
        <dbReference type="ChEBI" id="CHEBI:49786"/>
    </ligand>
</feature>
<feature type="binding site" evidence="1">
    <location>
        <position position="141"/>
    </location>
    <ligand>
        <name>Fe(2+)</name>
        <dbReference type="ChEBI" id="CHEBI:29033"/>
    </ligand>
</feature>
<feature type="binding site" evidence="1">
    <location>
        <position position="141"/>
    </location>
    <ligand>
        <name>Ni(2+)</name>
        <dbReference type="ChEBI" id="CHEBI:49786"/>
    </ligand>
</feature>
<feature type="site" description="May play a role in metal incorporation in vivo" evidence="1">
    <location>
        <position position="96"/>
    </location>
</feature>
<feature type="site" description="May play a role in transmitting local conformational changes" evidence="1">
    <location>
        <position position="102"/>
    </location>
</feature>
<feature type="site" description="Important to generate the dianion" evidence="1">
    <location>
        <position position="105"/>
    </location>
</feature>
<feature type="sequence conflict" description="In Ref. 1; CAB55631." evidence="2" ref="1">
    <original>D</original>
    <variation>N</variation>
    <location>
        <position position="170"/>
    </location>
</feature>
<evidence type="ECO:0000255" key="1">
    <source>
        <dbReference type="HAMAP-Rule" id="MF_01682"/>
    </source>
</evidence>
<evidence type="ECO:0000305" key="2"/>
<keyword id="KW-0028">Amino-acid biosynthesis</keyword>
<keyword id="KW-0223">Dioxygenase</keyword>
<keyword id="KW-0408">Iron</keyword>
<keyword id="KW-0479">Metal-binding</keyword>
<keyword id="KW-0486">Methionine biosynthesis</keyword>
<keyword id="KW-0533">Nickel</keyword>
<keyword id="KW-0560">Oxidoreductase</keyword>
<keyword id="KW-1185">Reference proteome</keyword>